<dbReference type="EMBL" id="CP000970">
    <property type="protein sequence ID" value="ACB15810.1"/>
    <property type="molecule type" value="Genomic_DNA"/>
</dbReference>
<dbReference type="RefSeq" id="WP_001295627.1">
    <property type="nucleotide sequence ID" value="NC_010498.1"/>
</dbReference>
<dbReference type="SMR" id="B1LF36"/>
<dbReference type="GeneID" id="93778954"/>
<dbReference type="KEGG" id="ecm:EcSMS35_3337"/>
<dbReference type="HOGENOM" id="CLU_015114_1_3_6"/>
<dbReference type="Proteomes" id="UP000007011">
    <property type="component" value="Chromosome"/>
</dbReference>
<dbReference type="GO" id="GO:0005886">
    <property type="term" value="C:plasma membrane"/>
    <property type="evidence" value="ECO:0007669"/>
    <property type="project" value="UniProtKB-SubCell"/>
</dbReference>
<dbReference type="GO" id="GO:0046872">
    <property type="term" value="F:metal ion binding"/>
    <property type="evidence" value="ECO:0007669"/>
    <property type="project" value="UniProtKB-KW"/>
</dbReference>
<dbReference type="GO" id="GO:0005385">
    <property type="term" value="F:zinc ion transmembrane transporter activity"/>
    <property type="evidence" value="ECO:0007669"/>
    <property type="project" value="UniProtKB-UniRule"/>
</dbReference>
<dbReference type="HAMAP" id="MF_00548">
    <property type="entry name" value="ZupT"/>
    <property type="match status" value="1"/>
</dbReference>
<dbReference type="InterPro" id="IPR003689">
    <property type="entry name" value="ZIP"/>
</dbReference>
<dbReference type="InterPro" id="IPR023498">
    <property type="entry name" value="Zn_transptr_ZupT"/>
</dbReference>
<dbReference type="NCBIfam" id="NF003243">
    <property type="entry name" value="PRK04201.1"/>
    <property type="match status" value="1"/>
</dbReference>
<dbReference type="PANTHER" id="PTHR11040:SF205">
    <property type="entry name" value="ZINC TRANSPORTER ZUPT"/>
    <property type="match status" value="1"/>
</dbReference>
<dbReference type="PANTHER" id="PTHR11040">
    <property type="entry name" value="ZINC/IRON TRANSPORTER"/>
    <property type="match status" value="1"/>
</dbReference>
<dbReference type="Pfam" id="PF02535">
    <property type="entry name" value="Zip"/>
    <property type="match status" value="2"/>
</dbReference>
<accession>B1LF36</accession>
<protein>
    <recommendedName>
        <fullName evidence="1">Zinc transporter ZupT</fullName>
    </recommendedName>
</protein>
<reference key="1">
    <citation type="journal article" date="2008" name="J. Bacteriol.">
        <title>Insights into the environmental resistance gene pool from the genome sequence of the multidrug-resistant environmental isolate Escherichia coli SMS-3-5.</title>
        <authorList>
            <person name="Fricke W.F."/>
            <person name="Wright M.S."/>
            <person name="Lindell A.H."/>
            <person name="Harkins D.M."/>
            <person name="Baker-Austin C."/>
            <person name="Ravel J."/>
            <person name="Stepanauskas R."/>
        </authorList>
    </citation>
    <scope>NUCLEOTIDE SEQUENCE [LARGE SCALE GENOMIC DNA]</scope>
    <source>
        <strain>SMS-3-5 / SECEC</strain>
    </source>
</reference>
<keyword id="KW-0997">Cell inner membrane</keyword>
<keyword id="KW-1003">Cell membrane</keyword>
<keyword id="KW-0406">Ion transport</keyword>
<keyword id="KW-0408">Iron</keyword>
<keyword id="KW-0472">Membrane</keyword>
<keyword id="KW-0479">Metal-binding</keyword>
<keyword id="KW-0812">Transmembrane</keyword>
<keyword id="KW-1133">Transmembrane helix</keyword>
<keyword id="KW-0813">Transport</keyword>
<keyword id="KW-0862">Zinc</keyword>
<keyword id="KW-0864">Zinc transport</keyword>
<sequence>MSVPLILTILAGAATFIGAFLGVLGQKPSNRLLAFSLGFAAGIMLLISLMEMLPAALAAEGMSPVLGYGMFIFGLLGYFGLDRMLPHAHPQDLMQKSVQPLPKSIKRTAILLTLGISLHNFPEGIATFVTASSNLELGFGIALAVALHNIPEGLAVAGPVYAATGSKRTAILWAGISGLAEILGGVLAWLILGSMISPVVMAAIMAAVAGIMVALSVDELMPLAKEIDPNNNPSYGVLCGMSVMGFSLVLLQTAGIG</sequence>
<organism>
    <name type="scientific">Escherichia coli (strain SMS-3-5 / SECEC)</name>
    <dbReference type="NCBI Taxonomy" id="439855"/>
    <lineage>
        <taxon>Bacteria</taxon>
        <taxon>Pseudomonadati</taxon>
        <taxon>Pseudomonadota</taxon>
        <taxon>Gammaproteobacteria</taxon>
        <taxon>Enterobacterales</taxon>
        <taxon>Enterobacteriaceae</taxon>
        <taxon>Escherichia</taxon>
    </lineage>
</organism>
<name>ZUPT_ECOSM</name>
<comment type="function">
    <text evidence="1">Mediates zinc uptake. May also transport other divalent cations.</text>
</comment>
<comment type="catalytic activity">
    <reaction evidence="1">
        <text>Zn(2+)(in) = Zn(2+)(out)</text>
        <dbReference type="Rhea" id="RHEA:29351"/>
        <dbReference type="ChEBI" id="CHEBI:29105"/>
    </reaction>
</comment>
<comment type="subcellular location">
    <subcellularLocation>
        <location evidence="1">Cell inner membrane</location>
        <topology evidence="1">Multi-pass membrane protein</topology>
    </subcellularLocation>
</comment>
<comment type="similarity">
    <text evidence="1">Belongs to the ZIP transporter (TC 2.A.5) family. ZupT subfamily.</text>
</comment>
<gene>
    <name evidence="1" type="primary">zupT</name>
    <name type="ordered locus">EcSMS35_3337</name>
</gene>
<proteinExistence type="inferred from homology"/>
<feature type="chain" id="PRO_1000128955" description="Zinc transporter ZupT">
    <location>
        <begin position="1"/>
        <end position="257"/>
    </location>
</feature>
<feature type="transmembrane region" description="Helical" evidence="1">
    <location>
        <begin position="5"/>
        <end position="25"/>
    </location>
</feature>
<feature type="transmembrane region" description="Helical" evidence="1">
    <location>
        <begin position="32"/>
        <end position="52"/>
    </location>
</feature>
<feature type="transmembrane region" description="Helical" evidence="1">
    <location>
        <begin position="61"/>
        <end position="81"/>
    </location>
</feature>
<feature type="transmembrane region" description="Helical" evidence="1">
    <location>
        <begin position="137"/>
        <end position="157"/>
    </location>
</feature>
<feature type="transmembrane region" description="Helical" evidence="1">
    <location>
        <begin position="171"/>
        <end position="191"/>
    </location>
</feature>
<feature type="transmembrane region" description="Helical" evidence="1">
    <location>
        <begin position="195"/>
        <end position="215"/>
    </location>
</feature>
<feature type="transmembrane region" description="Helical" evidence="1">
    <location>
        <begin position="236"/>
        <end position="256"/>
    </location>
</feature>
<feature type="binding site" description="M2 metal binding site" evidence="1">
    <location>
        <position position="120"/>
    </location>
    <ligand>
        <name>Fe(2+)</name>
        <dbReference type="ChEBI" id="CHEBI:29033"/>
    </ligand>
</feature>
<feature type="binding site" description="M2 metal binding site" evidence="1">
    <location>
        <position position="123"/>
    </location>
    <ligand>
        <name>Fe(2+)</name>
        <dbReference type="ChEBI" id="CHEBI:29033"/>
    </ligand>
</feature>
<feature type="binding site" description="M1 metal binding site" evidence="1">
    <location>
        <position position="123"/>
    </location>
    <ligand>
        <name>Zn(2+)</name>
        <dbReference type="ChEBI" id="CHEBI:29105"/>
    </ligand>
</feature>
<feature type="binding site" description="M1 metal binding site" evidence="1">
    <location>
        <position position="148"/>
    </location>
    <ligand>
        <name>Zn(2+)</name>
        <dbReference type="ChEBI" id="CHEBI:29105"/>
    </ligand>
</feature>
<feature type="binding site" description="M2 metal binding site" evidence="1">
    <location>
        <position position="149"/>
    </location>
    <ligand>
        <name>Fe(2+)</name>
        <dbReference type="ChEBI" id="CHEBI:29033"/>
    </ligand>
</feature>
<feature type="binding site" description="M2 metal binding site" evidence="1">
    <location>
        <position position="152"/>
    </location>
    <ligand>
        <name>Fe(2+)</name>
        <dbReference type="ChEBI" id="CHEBI:29033"/>
    </ligand>
</feature>
<feature type="binding site" description="M1 metal binding site" evidence="1">
    <location>
        <position position="152"/>
    </location>
    <ligand>
        <name>Zn(2+)</name>
        <dbReference type="ChEBI" id="CHEBI:29105"/>
    </ligand>
</feature>
<feature type="binding site" description="M2 metal binding site" evidence="1">
    <location>
        <position position="181"/>
    </location>
    <ligand>
        <name>Fe(2+)</name>
        <dbReference type="ChEBI" id="CHEBI:29033"/>
    </ligand>
</feature>
<evidence type="ECO:0000255" key="1">
    <source>
        <dbReference type="HAMAP-Rule" id="MF_00548"/>
    </source>
</evidence>